<protein>
    <recommendedName>
        <fullName evidence="1">Large ribosomal subunit protein uL24</fullName>
    </recommendedName>
    <alternativeName>
        <fullName evidence="2">50S ribosomal protein L24</fullName>
    </alternativeName>
</protein>
<proteinExistence type="inferred from homology"/>
<gene>
    <name evidence="1" type="primary">rplX</name>
    <name type="ordered locus">BR1222</name>
    <name type="ordered locus">BS1330_I1218</name>
</gene>
<organism>
    <name type="scientific">Brucella suis biovar 1 (strain 1330)</name>
    <dbReference type="NCBI Taxonomy" id="204722"/>
    <lineage>
        <taxon>Bacteria</taxon>
        <taxon>Pseudomonadati</taxon>
        <taxon>Pseudomonadota</taxon>
        <taxon>Alphaproteobacteria</taxon>
        <taxon>Hyphomicrobiales</taxon>
        <taxon>Brucellaceae</taxon>
        <taxon>Brucella/Ochrobactrum group</taxon>
        <taxon>Brucella</taxon>
    </lineage>
</organism>
<comment type="function">
    <text evidence="1">One of two assembly initiator proteins, it binds directly to the 5'-end of the 23S rRNA, where it nucleates assembly of the 50S subunit.</text>
</comment>
<comment type="function">
    <text evidence="1">One of the proteins that surrounds the polypeptide exit tunnel on the outside of the subunit.</text>
</comment>
<comment type="subunit">
    <text evidence="1">Part of the 50S ribosomal subunit.</text>
</comment>
<comment type="similarity">
    <text evidence="1">Belongs to the universal ribosomal protein uL24 family.</text>
</comment>
<reference key="1">
    <citation type="journal article" date="2002" name="Proc. Natl. Acad. Sci. U.S.A.">
        <title>The Brucella suis genome reveals fundamental similarities between animal and plant pathogens and symbionts.</title>
        <authorList>
            <person name="Paulsen I.T."/>
            <person name="Seshadri R."/>
            <person name="Nelson K.E."/>
            <person name="Eisen J.A."/>
            <person name="Heidelberg J.F."/>
            <person name="Read T.D."/>
            <person name="Dodson R.J."/>
            <person name="Umayam L.A."/>
            <person name="Brinkac L.M."/>
            <person name="Beanan M.J."/>
            <person name="Daugherty S.C."/>
            <person name="DeBoy R.T."/>
            <person name="Durkin A.S."/>
            <person name="Kolonay J.F."/>
            <person name="Madupu R."/>
            <person name="Nelson W.C."/>
            <person name="Ayodeji B."/>
            <person name="Kraul M."/>
            <person name="Shetty J."/>
            <person name="Malek J.A."/>
            <person name="Van Aken S.E."/>
            <person name="Riedmuller S."/>
            <person name="Tettelin H."/>
            <person name="Gill S.R."/>
            <person name="White O."/>
            <person name="Salzberg S.L."/>
            <person name="Hoover D.L."/>
            <person name="Lindler L.E."/>
            <person name="Halling S.M."/>
            <person name="Boyle S.M."/>
            <person name="Fraser C.M."/>
        </authorList>
    </citation>
    <scope>NUCLEOTIDE SEQUENCE [LARGE SCALE GENOMIC DNA]</scope>
    <source>
        <strain>1330</strain>
    </source>
</reference>
<reference key="2">
    <citation type="journal article" date="2011" name="J. Bacteriol.">
        <title>Revised genome sequence of Brucella suis 1330.</title>
        <authorList>
            <person name="Tae H."/>
            <person name="Shallom S."/>
            <person name="Settlage R."/>
            <person name="Preston D."/>
            <person name="Adams L.G."/>
            <person name="Garner H.R."/>
        </authorList>
    </citation>
    <scope>NUCLEOTIDE SEQUENCE [LARGE SCALE GENOMIC DNA]</scope>
    <source>
        <strain>1330</strain>
    </source>
</reference>
<name>RL24_BRUSU</name>
<evidence type="ECO:0000255" key="1">
    <source>
        <dbReference type="HAMAP-Rule" id="MF_01326"/>
    </source>
</evidence>
<evidence type="ECO:0000305" key="2"/>
<keyword id="KW-0687">Ribonucleoprotein</keyword>
<keyword id="KW-0689">Ribosomal protein</keyword>
<keyword id="KW-0694">RNA-binding</keyword>
<keyword id="KW-0699">rRNA-binding</keyword>
<feature type="chain" id="PRO_0000130632" description="Large ribosomal subunit protein uL24">
    <location>
        <begin position="1"/>
        <end position="103"/>
    </location>
</feature>
<sequence>MQKIRKGDSVVVLSGKDKGRKGEVLKVMPKDEQALVSGINIVKRHQRQTQTQEAGIISKEAPIHLSNLAIADPKDGKPTRVGFRVEDGKKVRVAKRSGALIDG</sequence>
<dbReference type="EMBL" id="AE014291">
    <property type="protein sequence ID" value="AAN30141.1"/>
    <property type="molecule type" value="Genomic_DNA"/>
</dbReference>
<dbReference type="EMBL" id="CP002997">
    <property type="protein sequence ID" value="AEM18559.1"/>
    <property type="molecule type" value="Genomic_DNA"/>
</dbReference>
<dbReference type="PIR" id="AB3348">
    <property type="entry name" value="AB3348"/>
</dbReference>
<dbReference type="RefSeq" id="WP_002964351.1">
    <property type="nucleotide sequence ID" value="NZ_KN046804.1"/>
</dbReference>
<dbReference type="SMR" id="Q8G084"/>
<dbReference type="GeneID" id="97533535"/>
<dbReference type="KEGG" id="bms:BR1222"/>
<dbReference type="KEGG" id="bsi:BS1330_I1218"/>
<dbReference type="PATRIC" id="fig|204722.21.peg.2254"/>
<dbReference type="HOGENOM" id="CLU_093315_2_2_5"/>
<dbReference type="PhylomeDB" id="Q8G084"/>
<dbReference type="Proteomes" id="UP000007104">
    <property type="component" value="Chromosome I"/>
</dbReference>
<dbReference type="GO" id="GO:1990904">
    <property type="term" value="C:ribonucleoprotein complex"/>
    <property type="evidence" value="ECO:0007669"/>
    <property type="project" value="UniProtKB-KW"/>
</dbReference>
<dbReference type="GO" id="GO:0005840">
    <property type="term" value="C:ribosome"/>
    <property type="evidence" value="ECO:0007669"/>
    <property type="project" value="UniProtKB-KW"/>
</dbReference>
<dbReference type="GO" id="GO:0019843">
    <property type="term" value="F:rRNA binding"/>
    <property type="evidence" value="ECO:0007669"/>
    <property type="project" value="UniProtKB-UniRule"/>
</dbReference>
<dbReference type="GO" id="GO:0003735">
    <property type="term" value="F:structural constituent of ribosome"/>
    <property type="evidence" value="ECO:0007669"/>
    <property type="project" value="InterPro"/>
</dbReference>
<dbReference type="GO" id="GO:0006412">
    <property type="term" value="P:translation"/>
    <property type="evidence" value="ECO:0007669"/>
    <property type="project" value="UniProtKB-UniRule"/>
</dbReference>
<dbReference type="CDD" id="cd06089">
    <property type="entry name" value="KOW_RPL26"/>
    <property type="match status" value="1"/>
</dbReference>
<dbReference type="FunFam" id="2.30.30.30:FF:000004">
    <property type="entry name" value="50S ribosomal protein L24"/>
    <property type="match status" value="1"/>
</dbReference>
<dbReference type="Gene3D" id="2.30.30.30">
    <property type="match status" value="1"/>
</dbReference>
<dbReference type="HAMAP" id="MF_01326_B">
    <property type="entry name" value="Ribosomal_uL24_B"/>
    <property type="match status" value="1"/>
</dbReference>
<dbReference type="InterPro" id="IPR005824">
    <property type="entry name" value="KOW"/>
</dbReference>
<dbReference type="InterPro" id="IPR014722">
    <property type="entry name" value="Rib_uL2_dom2"/>
</dbReference>
<dbReference type="InterPro" id="IPR003256">
    <property type="entry name" value="Ribosomal_uL24"/>
</dbReference>
<dbReference type="InterPro" id="IPR005825">
    <property type="entry name" value="Ribosomal_uL24_CS"/>
</dbReference>
<dbReference type="InterPro" id="IPR041988">
    <property type="entry name" value="Ribosomal_uL24_KOW"/>
</dbReference>
<dbReference type="InterPro" id="IPR008991">
    <property type="entry name" value="Translation_prot_SH3-like_sf"/>
</dbReference>
<dbReference type="NCBIfam" id="TIGR01079">
    <property type="entry name" value="rplX_bact"/>
    <property type="match status" value="1"/>
</dbReference>
<dbReference type="PANTHER" id="PTHR12903">
    <property type="entry name" value="MITOCHONDRIAL RIBOSOMAL PROTEIN L24"/>
    <property type="match status" value="1"/>
</dbReference>
<dbReference type="Pfam" id="PF00467">
    <property type="entry name" value="KOW"/>
    <property type="match status" value="1"/>
</dbReference>
<dbReference type="Pfam" id="PF17136">
    <property type="entry name" value="ribosomal_L24"/>
    <property type="match status" value="1"/>
</dbReference>
<dbReference type="SMART" id="SM00739">
    <property type="entry name" value="KOW"/>
    <property type="match status" value="1"/>
</dbReference>
<dbReference type="SUPFAM" id="SSF50104">
    <property type="entry name" value="Translation proteins SH3-like domain"/>
    <property type="match status" value="1"/>
</dbReference>
<dbReference type="PROSITE" id="PS01108">
    <property type="entry name" value="RIBOSOMAL_L24"/>
    <property type="match status" value="1"/>
</dbReference>
<accession>Q8G084</accession>
<accession>G0KAE3</accession>